<gene>
    <name evidence="1" type="primary">nadD</name>
    <name type="ordered locus">Exig_0767</name>
</gene>
<accession>B1YKR5</accession>
<name>NADD_EXIS2</name>
<reference key="1">
    <citation type="submission" date="2008-04" db="EMBL/GenBank/DDBJ databases">
        <title>Complete sequence of chromosome of Exiguobacterium sibiricum 255-15.</title>
        <authorList>
            <consortium name="US DOE Joint Genome Institute"/>
            <person name="Copeland A."/>
            <person name="Lucas S."/>
            <person name="Lapidus A."/>
            <person name="Glavina del Rio T."/>
            <person name="Dalin E."/>
            <person name="Tice H."/>
            <person name="Bruce D."/>
            <person name="Goodwin L."/>
            <person name="Pitluck S."/>
            <person name="Kiss H."/>
            <person name="Chertkov O."/>
            <person name="Monk C."/>
            <person name="Brettin T."/>
            <person name="Detter J.C."/>
            <person name="Han C."/>
            <person name="Kuske C.R."/>
            <person name="Schmutz J."/>
            <person name="Larimer F."/>
            <person name="Land M."/>
            <person name="Hauser L."/>
            <person name="Kyrpides N."/>
            <person name="Mikhailova N."/>
            <person name="Vishnivetskaya T."/>
            <person name="Rodrigues D.F."/>
            <person name="Gilichinsky D."/>
            <person name="Tiedje J."/>
            <person name="Richardson P."/>
        </authorList>
    </citation>
    <scope>NUCLEOTIDE SEQUENCE [LARGE SCALE GENOMIC DNA]</scope>
    <source>
        <strain>DSM 17290 / CCUG 55495 / CIP 109462 / JCM 13490 / 255-15</strain>
    </source>
</reference>
<dbReference type="EC" id="2.7.7.18" evidence="1"/>
<dbReference type="EMBL" id="CP001022">
    <property type="protein sequence ID" value="ACB60248.1"/>
    <property type="molecule type" value="Genomic_DNA"/>
</dbReference>
<dbReference type="RefSeq" id="WP_012369672.1">
    <property type="nucleotide sequence ID" value="NC_010556.1"/>
</dbReference>
<dbReference type="SMR" id="B1YKR5"/>
<dbReference type="STRING" id="262543.Exig_0767"/>
<dbReference type="KEGG" id="esi:Exig_0767"/>
<dbReference type="eggNOG" id="COG1057">
    <property type="taxonomic scope" value="Bacteria"/>
</dbReference>
<dbReference type="HOGENOM" id="CLU_069765_3_1_9"/>
<dbReference type="OrthoDB" id="5295945at2"/>
<dbReference type="UniPathway" id="UPA00253">
    <property type="reaction ID" value="UER00332"/>
</dbReference>
<dbReference type="Proteomes" id="UP000001681">
    <property type="component" value="Chromosome"/>
</dbReference>
<dbReference type="GO" id="GO:0005524">
    <property type="term" value="F:ATP binding"/>
    <property type="evidence" value="ECO:0007669"/>
    <property type="project" value="UniProtKB-KW"/>
</dbReference>
<dbReference type="GO" id="GO:0004515">
    <property type="term" value="F:nicotinate-nucleotide adenylyltransferase activity"/>
    <property type="evidence" value="ECO:0007669"/>
    <property type="project" value="UniProtKB-UniRule"/>
</dbReference>
<dbReference type="GO" id="GO:0009435">
    <property type="term" value="P:NAD biosynthetic process"/>
    <property type="evidence" value="ECO:0007669"/>
    <property type="project" value="UniProtKB-UniRule"/>
</dbReference>
<dbReference type="CDD" id="cd02165">
    <property type="entry name" value="NMNAT"/>
    <property type="match status" value="1"/>
</dbReference>
<dbReference type="Gene3D" id="3.40.50.620">
    <property type="entry name" value="HUPs"/>
    <property type="match status" value="1"/>
</dbReference>
<dbReference type="HAMAP" id="MF_00244">
    <property type="entry name" value="NaMN_adenylyltr"/>
    <property type="match status" value="1"/>
</dbReference>
<dbReference type="InterPro" id="IPR004821">
    <property type="entry name" value="Cyt_trans-like"/>
</dbReference>
<dbReference type="InterPro" id="IPR005248">
    <property type="entry name" value="NadD/NMNAT"/>
</dbReference>
<dbReference type="InterPro" id="IPR014729">
    <property type="entry name" value="Rossmann-like_a/b/a_fold"/>
</dbReference>
<dbReference type="NCBIfam" id="TIGR00125">
    <property type="entry name" value="cyt_tran_rel"/>
    <property type="match status" value="1"/>
</dbReference>
<dbReference type="NCBIfam" id="TIGR00482">
    <property type="entry name" value="nicotinate (nicotinamide) nucleotide adenylyltransferase"/>
    <property type="match status" value="1"/>
</dbReference>
<dbReference type="NCBIfam" id="NF000840">
    <property type="entry name" value="PRK00071.1-3"/>
    <property type="match status" value="1"/>
</dbReference>
<dbReference type="NCBIfam" id="NF000841">
    <property type="entry name" value="PRK00071.1-4"/>
    <property type="match status" value="1"/>
</dbReference>
<dbReference type="PANTHER" id="PTHR39321">
    <property type="entry name" value="NICOTINATE-NUCLEOTIDE ADENYLYLTRANSFERASE-RELATED"/>
    <property type="match status" value="1"/>
</dbReference>
<dbReference type="PANTHER" id="PTHR39321:SF3">
    <property type="entry name" value="PHOSPHOPANTETHEINE ADENYLYLTRANSFERASE"/>
    <property type="match status" value="1"/>
</dbReference>
<dbReference type="Pfam" id="PF01467">
    <property type="entry name" value="CTP_transf_like"/>
    <property type="match status" value="1"/>
</dbReference>
<dbReference type="SUPFAM" id="SSF52374">
    <property type="entry name" value="Nucleotidylyl transferase"/>
    <property type="match status" value="1"/>
</dbReference>
<comment type="function">
    <text evidence="1">Catalyzes the reversible adenylation of nicotinate mononucleotide (NaMN) to nicotinic acid adenine dinucleotide (NaAD).</text>
</comment>
<comment type="catalytic activity">
    <reaction evidence="1">
        <text>nicotinate beta-D-ribonucleotide + ATP + H(+) = deamido-NAD(+) + diphosphate</text>
        <dbReference type="Rhea" id="RHEA:22860"/>
        <dbReference type="ChEBI" id="CHEBI:15378"/>
        <dbReference type="ChEBI" id="CHEBI:30616"/>
        <dbReference type="ChEBI" id="CHEBI:33019"/>
        <dbReference type="ChEBI" id="CHEBI:57502"/>
        <dbReference type="ChEBI" id="CHEBI:58437"/>
        <dbReference type="EC" id="2.7.7.18"/>
    </reaction>
</comment>
<comment type="pathway">
    <text evidence="1">Cofactor biosynthesis; NAD(+) biosynthesis; deamido-NAD(+) from nicotinate D-ribonucleotide: step 1/1.</text>
</comment>
<comment type="similarity">
    <text evidence="1">Belongs to the NadD family.</text>
</comment>
<protein>
    <recommendedName>
        <fullName evidence="1">Probable nicotinate-nucleotide adenylyltransferase</fullName>
        <ecNumber evidence="1">2.7.7.18</ecNumber>
    </recommendedName>
    <alternativeName>
        <fullName evidence="1">Deamido-NAD(+) diphosphorylase</fullName>
    </alternativeName>
    <alternativeName>
        <fullName evidence="1">Deamido-NAD(+) pyrophosphorylase</fullName>
    </alternativeName>
    <alternativeName>
        <fullName evidence="1">Nicotinate mononucleotide adenylyltransferase</fullName>
        <shortName evidence="1">NaMN adenylyltransferase</shortName>
    </alternativeName>
</protein>
<sequence length="189" mass="21638">MKIGLMGGTFDPPHIGHLLIAEQAKEQLQLDAVWFLPAKLPPHKQSTVTSAAKRLELVRAAVRDNQDFSVSEIEFERETKSYTFDTIRELKRRYPEHAFFFLIGADSLVSLGTWHRSEKLYKEIEFGAVARPGSRYLIPEGARVTAVDMPLLEVSSTDIRQRVARGRSIRYLVPEPVRQLIEEWNLYAT</sequence>
<feature type="chain" id="PRO_1000100776" description="Probable nicotinate-nucleotide adenylyltransferase">
    <location>
        <begin position="1"/>
        <end position="189"/>
    </location>
</feature>
<keyword id="KW-0067">ATP-binding</keyword>
<keyword id="KW-0520">NAD</keyword>
<keyword id="KW-0547">Nucleotide-binding</keyword>
<keyword id="KW-0548">Nucleotidyltransferase</keyword>
<keyword id="KW-0662">Pyridine nucleotide biosynthesis</keyword>
<keyword id="KW-1185">Reference proteome</keyword>
<keyword id="KW-0808">Transferase</keyword>
<organism>
    <name type="scientific">Exiguobacterium sibiricum (strain DSM 17290 / CCUG 55495 / CIP 109462 / JCM 13490 / 255-15)</name>
    <dbReference type="NCBI Taxonomy" id="262543"/>
    <lineage>
        <taxon>Bacteria</taxon>
        <taxon>Bacillati</taxon>
        <taxon>Bacillota</taxon>
        <taxon>Bacilli</taxon>
        <taxon>Bacillales</taxon>
        <taxon>Bacillales Family XII. Incertae Sedis</taxon>
        <taxon>Exiguobacterium</taxon>
    </lineage>
</organism>
<proteinExistence type="inferred from homology"/>
<evidence type="ECO:0000255" key="1">
    <source>
        <dbReference type="HAMAP-Rule" id="MF_00244"/>
    </source>
</evidence>